<feature type="chain" id="PRO_0000213529" description="Serine/threonine-protein kinase RIO3">
    <location>
        <begin position="1"/>
        <end position="519"/>
    </location>
</feature>
<feature type="domain" description="Protein kinase">
    <location>
        <begin position="251"/>
        <end position="519"/>
    </location>
</feature>
<feature type="region of interest" description="Disordered" evidence="3">
    <location>
        <begin position="121"/>
        <end position="159"/>
    </location>
</feature>
<feature type="compositionally biased region" description="Acidic residues" evidence="3">
    <location>
        <begin position="124"/>
        <end position="134"/>
    </location>
</feature>
<feature type="active site" description="Proton acceptor" evidence="1">
    <location>
        <position position="406"/>
    </location>
</feature>
<feature type="binding site" evidence="1">
    <location>
        <begin position="257"/>
        <end position="265"/>
    </location>
    <ligand>
        <name>ATP</name>
        <dbReference type="ChEBI" id="CHEBI:30616"/>
    </ligand>
</feature>
<feature type="binding site" evidence="1">
    <location>
        <position position="290"/>
    </location>
    <ligand>
        <name>ATP</name>
        <dbReference type="ChEBI" id="CHEBI:30616"/>
    </ligand>
</feature>
<feature type="modified residue" description="Phosphoserine" evidence="14">
    <location>
        <position position="8"/>
    </location>
</feature>
<feature type="modified residue" description="Phosphoserine" evidence="14">
    <location>
        <position position="112"/>
    </location>
</feature>
<feature type="modified residue" description="Phosphotyrosine" evidence="13">
    <location>
        <position position="122"/>
    </location>
</feature>
<feature type="modified residue" description="Phosphoserine" evidence="2">
    <location>
        <position position="125"/>
    </location>
</feature>
<feature type="modified residue" description="Phosphoserine" evidence="13">
    <location>
        <position position="127"/>
    </location>
</feature>
<feature type="modified residue" description="Phosphoserine" evidence="13">
    <location>
        <position position="128"/>
    </location>
</feature>
<feature type="splice variant" id="VSP_012164" description="In isoform 2." evidence="11">
    <location>
        <begin position="449"/>
        <end position="451"/>
    </location>
</feature>
<feature type="sequence variant" id="VAR_042355" description="In dbSNP:rs35401850." evidence="4">
    <original>L</original>
    <variation>V</variation>
    <location>
        <position position="336"/>
    </location>
</feature>
<feature type="sequence variant" id="VAR_042356" description="In dbSNP:rs33969048." evidence="4">
    <original>R</original>
    <variation>Q</variation>
    <location>
        <position position="441"/>
    </location>
</feature>
<feature type="sequence variant" id="VAR_042357" description="In dbSNP:rs56282762." evidence="4">
    <original>S</original>
    <variation>L</variation>
    <location>
        <position position="447"/>
    </location>
</feature>
<feature type="mutagenesis site" description="Decreases autophosphorylation (in vitro); abolishes inhibition of TNF-alpha-induced NF-kappaB activation; no effect on interaction with IRF3; fails to activate IFN-beta promoter and IRF3 phosphorylation." evidence="5 8">
    <original>K</original>
    <variation>A</variation>
    <location>
        <position position="290"/>
    </location>
</feature>
<feature type="sequence conflict" description="In Ref. 1; AAC26080." evidence="12" ref="1">
    <original>I</original>
    <variation>H</variation>
    <location>
        <position position="325"/>
    </location>
</feature>
<organism>
    <name type="scientific">Homo sapiens</name>
    <name type="common">Human</name>
    <dbReference type="NCBI Taxonomy" id="9606"/>
    <lineage>
        <taxon>Eukaryota</taxon>
        <taxon>Metazoa</taxon>
        <taxon>Chordata</taxon>
        <taxon>Craniata</taxon>
        <taxon>Vertebrata</taxon>
        <taxon>Euteleostomi</taxon>
        <taxon>Mammalia</taxon>
        <taxon>Eutheria</taxon>
        <taxon>Euarchontoglires</taxon>
        <taxon>Primates</taxon>
        <taxon>Haplorrhini</taxon>
        <taxon>Catarrhini</taxon>
        <taxon>Hominidae</taxon>
        <taxon>Homo</taxon>
    </lineage>
</organism>
<keyword id="KW-0002">3D-structure</keyword>
<keyword id="KW-0025">Alternative splicing</keyword>
<keyword id="KW-0051">Antiviral defense</keyword>
<keyword id="KW-0067">ATP-binding</keyword>
<keyword id="KW-0963">Cytoplasm</keyword>
<keyword id="KW-0391">Immunity</keyword>
<keyword id="KW-0399">Innate immunity</keyword>
<keyword id="KW-0418">Kinase</keyword>
<keyword id="KW-0460">Magnesium</keyword>
<keyword id="KW-0479">Metal-binding</keyword>
<keyword id="KW-0547">Nucleotide-binding</keyword>
<keyword id="KW-0597">Phosphoprotein</keyword>
<keyword id="KW-1267">Proteomics identification</keyword>
<keyword id="KW-1185">Reference proteome</keyword>
<keyword id="KW-0690">Ribosome biogenesis</keyword>
<keyword id="KW-0723">Serine/threonine-protein kinase</keyword>
<keyword id="KW-0808">Transferase</keyword>
<gene>
    <name type="primary">RIOK3</name>
    <name type="synonym">SUDD</name>
</gene>
<reference key="1">
    <citation type="journal article" date="1998" name="Gene">
        <title>Isolation of the Aspergillus nidulans sudD gene and its human homologue.</title>
        <authorList>
            <person name="Anaya P."/>
            <person name="Evans S.C."/>
            <person name="Dai C."/>
            <person name="Lozano G."/>
            <person name="May G.S."/>
        </authorList>
    </citation>
    <scope>NUCLEOTIDE SEQUENCE [MRNA] (ISOFORM 1)</scope>
    <scope>TISSUE SPECIFICITY</scope>
</reference>
<reference key="2">
    <citation type="journal article" date="2005" name="Nature">
        <title>DNA sequence and analysis of human chromosome 18.</title>
        <authorList>
            <person name="Nusbaum C."/>
            <person name="Zody M.C."/>
            <person name="Borowsky M.L."/>
            <person name="Kamal M."/>
            <person name="Kodira C.D."/>
            <person name="Taylor T.D."/>
            <person name="Whittaker C.A."/>
            <person name="Chang J.L."/>
            <person name="Cuomo C.A."/>
            <person name="Dewar K."/>
            <person name="FitzGerald M.G."/>
            <person name="Yang X."/>
            <person name="Abouelleil A."/>
            <person name="Allen N.R."/>
            <person name="Anderson S."/>
            <person name="Bloom T."/>
            <person name="Bugalter B."/>
            <person name="Butler J."/>
            <person name="Cook A."/>
            <person name="DeCaprio D."/>
            <person name="Engels R."/>
            <person name="Garber M."/>
            <person name="Gnirke A."/>
            <person name="Hafez N."/>
            <person name="Hall J.L."/>
            <person name="Norman C.H."/>
            <person name="Itoh T."/>
            <person name="Jaffe D.B."/>
            <person name="Kuroki Y."/>
            <person name="Lehoczky J."/>
            <person name="Lui A."/>
            <person name="Macdonald P."/>
            <person name="Mauceli E."/>
            <person name="Mikkelsen T.S."/>
            <person name="Naylor J.W."/>
            <person name="Nicol R."/>
            <person name="Nguyen C."/>
            <person name="Noguchi H."/>
            <person name="O'Leary S.B."/>
            <person name="Piqani B."/>
            <person name="Smith C.L."/>
            <person name="Talamas J.A."/>
            <person name="Topham K."/>
            <person name="Totoki Y."/>
            <person name="Toyoda A."/>
            <person name="Wain H.M."/>
            <person name="Young S.K."/>
            <person name="Zeng Q."/>
            <person name="Zimmer A.R."/>
            <person name="Fujiyama A."/>
            <person name="Hattori M."/>
            <person name="Birren B.W."/>
            <person name="Sakaki Y."/>
            <person name="Lander E.S."/>
        </authorList>
    </citation>
    <scope>NUCLEOTIDE SEQUENCE [LARGE SCALE GENOMIC DNA]</scope>
</reference>
<reference key="3">
    <citation type="journal article" date="2004" name="Genome Res.">
        <title>The status, quality, and expansion of the NIH full-length cDNA project: the Mammalian Gene Collection (MGC).</title>
        <authorList>
            <consortium name="The MGC Project Team"/>
        </authorList>
    </citation>
    <scope>NUCLEOTIDE SEQUENCE [LARGE SCALE MRNA] (ISOFORM 2)</scope>
    <source>
        <tissue>Brain</tissue>
    </source>
</reference>
<reference key="4">
    <citation type="journal article" date="2008" name="Proc. Natl. Acad. Sci. U.S.A.">
        <title>A quantitative atlas of mitotic phosphorylation.</title>
        <authorList>
            <person name="Dephoure N."/>
            <person name="Zhou C."/>
            <person name="Villen J."/>
            <person name="Beausoleil S.A."/>
            <person name="Bakalarski C.E."/>
            <person name="Elledge S.J."/>
            <person name="Gygi S.P."/>
        </authorList>
    </citation>
    <scope>PHOSPHORYLATION [LARGE SCALE ANALYSIS] AT TYR-122; SER-127 AND SER-128</scope>
    <scope>IDENTIFICATION BY MASS SPECTROMETRY [LARGE SCALE ANALYSIS]</scope>
    <source>
        <tissue>Cervix carcinoma</tissue>
    </source>
</reference>
<reference key="5">
    <citation type="journal article" date="2009" name="Mol. Cell. Biochem.">
        <title>RIOK3 interacts with caspase-10 and negatively regulates the NF-kappaB signaling pathway.</title>
        <authorList>
            <person name="Shan J."/>
            <person name="Wang P."/>
            <person name="Zhou J."/>
            <person name="Wu D."/>
            <person name="Shi H."/>
            <person name="Huo K."/>
        </authorList>
    </citation>
    <scope>FUNCTION</scope>
    <scope>INTERACTION WITH CASP10</scope>
    <scope>MUTAGENESIS OF LYS-290</scope>
    <scope>PHOSPHORYLATION</scope>
</reference>
<reference key="6">
    <citation type="journal article" date="2011" name="BMC Syst. Biol.">
        <title>Initial characterization of the human central proteome.</title>
        <authorList>
            <person name="Burkard T.R."/>
            <person name="Planyavsky M."/>
            <person name="Kaupe I."/>
            <person name="Breitwieser F.P."/>
            <person name="Buerckstuemmer T."/>
            <person name="Bennett K.L."/>
            <person name="Superti-Furga G."/>
            <person name="Colinge J."/>
        </authorList>
    </citation>
    <scope>IDENTIFICATION BY MASS SPECTROMETRY [LARGE SCALE ANALYSIS]</scope>
</reference>
<reference key="7">
    <citation type="journal article" date="2012" name="Mol. Biol. Cell">
        <title>The kinase activity of human Rio1 is required for final steps of cytoplasmic maturation of 40S subunits.</title>
        <authorList>
            <person name="Widmann B."/>
            <person name="Wandrey F."/>
            <person name="Badertscher L."/>
            <person name="Wyler E."/>
            <person name="Pfannstiel J."/>
            <person name="Zemp I."/>
            <person name="Kutay U."/>
        </authorList>
    </citation>
    <scope>SUBUNIT</scope>
</reference>
<reference key="8">
    <citation type="journal article" date="2012" name="RNA Biol.">
        <title>Human RioK3 is a novel component of cytoplasmic pre-40S pre-ribosomal particles.</title>
        <authorList>
            <person name="Baumas K."/>
            <person name="Soudet J."/>
            <person name="Caizergues-Ferrer M."/>
            <person name="Faubladier M."/>
            <person name="Henry Y."/>
            <person name="Mougin A."/>
        </authorList>
    </citation>
    <scope>FUNCTION</scope>
    <scope>SUBCELLULAR LOCATION</scope>
    <scope>SUBUNIT</scope>
</reference>
<reference key="9">
    <citation type="journal article" date="2013" name="J. Proteome Res.">
        <title>Toward a comprehensive characterization of a human cancer cell phosphoproteome.</title>
        <authorList>
            <person name="Zhou H."/>
            <person name="Di Palma S."/>
            <person name="Preisinger C."/>
            <person name="Peng M."/>
            <person name="Polat A.N."/>
            <person name="Heck A.J."/>
            <person name="Mohammed S."/>
        </authorList>
    </citation>
    <scope>PHOSPHORYLATION [LARGE SCALE ANALYSIS] AT SER-8 AND SER-112</scope>
    <scope>IDENTIFICATION BY MASS SPECTROMETRY [LARGE SCALE ANALYSIS]</scope>
    <source>
        <tissue>Erythroleukemia</tissue>
    </source>
</reference>
<reference key="10">
    <citation type="journal article" date="2014" name="J. Virol.">
        <title>RIOK3 is an adaptor protein required for IRF3-mediated antiviral type I interferon production.</title>
        <authorList>
            <person name="Feng J."/>
            <person name="De Jesus P.D."/>
            <person name="Su V."/>
            <person name="Han S."/>
            <person name="Gong D."/>
            <person name="Wu N.C."/>
            <person name="Tian Y."/>
            <person name="Li X."/>
            <person name="Wu T.T."/>
            <person name="Chanda S.K."/>
            <person name="Sun R."/>
        </authorList>
    </citation>
    <scope>FUNCTION</scope>
    <scope>INTERACTION WITH IRF3</scope>
    <scope>MUTAGENESIS OF LYS-290</scope>
</reference>
<reference key="11">
    <citation type="journal article" date="2015" name="Cell Rep.">
        <title>RIOK3-mediated phosphorylation of MDA5 interferes with its assembly and attenuates the innate immune response.</title>
        <authorList>
            <person name="Takashima K."/>
            <person name="Oshiumi H."/>
            <person name="Takaki H."/>
            <person name="Matsumoto M."/>
            <person name="Seya T."/>
        </authorList>
    </citation>
    <scope>FUNCTION</scope>
</reference>
<reference key="12">
    <citation type="journal article" date="2007" name="Nature">
        <title>Patterns of somatic mutation in human cancer genomes.</title>
        <authorList>
            <person name="Greenman C."/>
            <person name="Stephens P."/>
            <person name="Smith R."/>
            <person name="Dalgliesh G.L."/>
            <person name="Hunter C."/>
            <person name="Bignell G."/>
            <person name="Davies H."/>
            <person name="Teague J."/>
            <person name="Butler A."/>
            <person name="Stevens C."/>
            <person name="Edkins S."/>
            <person name="O'Meara S."/>
            <person name="Vastrik I."/>
            <person name="Schmidt E.E."/>
            <person name="Avis T."/>
            <person name="Barthorpe S."/>
            <person name="Bhamra G."/>
            <person name="Buck G."/>
            <person name="Choudhury B."/>
            <person name="Clements J."/>
            <person name="Cole J."/>
            <person name="Dicks E."/>
            <person name="Forbes S."/>
            <person name="Gray K."/>
            <person name="Halliday K."/>
            <person name="Harrison R."/>
            <person name="Hills K."/>
            <person name="Hinton J."/>
            <person name="Jenkinson A."/>
            <person name="Jones D."/>
            <person name="Menzies A."/>
            <person name="Mironenko T."/>
            <person name="Perry J."/>
            <person name="Raine K."/>
            <person name="Richardson D."/>
            <person name="Shepherd R."/>
            <person name="Small A."/>
            <person name="Tofts C."/>
            <person name="Varian J."/>
            <person name="Webb T."/>
            <person name="West S."/>
            <person name="Widaa S."/>
            <person name="Yates A."/>
            <person name="Cahill D.P."/>
            <person name="Louis D.N."/>
            <person name="Goldstraw P."/>
            <person name="Nicholson A.G."/>
            <person name="Brasseur F."/>
            <person name="Looijenga L."/>
            <person name="Weber B.L."/>
            <person name="Chiew Y.-E."/>
            <person name="DeFazio A."/>
            <person name="Greaves M.F."/>
            <person name="Green A.R."/>
            <person name="Campbell P."/>
            <person name="Birney E."/>
            <person name="Easton D.F."/>
            <person name="Chenevix-Trench G."/>
            <person name="Tan M.-H."/>
            <person name="Khoo S.K."/>
            <person name="Teh B.T."/>
            <person name="Yuen S.T."/>
            <person name="Leung S.Y."/>
            <person name="Wooster R."/>
            <person name="Futreal P.A."/>
            <person name="Stratton M.R."/>
        </authorList>
    </citation>
    <scope>VARIANTS [LARGE SCALE ANALYSIS] VAL-336; GLN-441 AND LEU-447</scope>
</reference>
<sequence length="519" mass="59093">MDLVGVASPEPGTAAAWGPSKCPWAIPQNTISCSLADVMSEQLAKELQLEEEAAVFPEVAVAEGPFITGENIDTSSDLMLAQMLQMEYDREYDAQLRREEKKFNGDSKVSISFENYRKVHPYEDSDSSEDEVDWQDTRDDPYRPAKPVPTPKKGFIGKGKDITTKHDEVVCGRKNTARMENFAPEFQVGDGIGMDLKLSNHVFNALKQHAYSEERRSARLHEKKEHSTAEKAVDPKTRLLMYKMVNSGMLETITGCISTGKESVVFHAYGGSMEDEKEDSKVIPTECAIKVFKTTLNEFKNRDKYIKDDFRFKDRFSKLNPRKIIRMWAEKEMHNLARMQRAGIPCPTVVLLKKHILVMSFIGHDQVPAPKLKEVKLNSEEMKEAYYQTLHLMRQLYHECTLVHADLSEYNMLWHAGKVWLIDVSQSVEPTHPHGLEFLFRDCRNVSQFFQKGGVKEALSERELFNAVSGLNITADNEADFLAEIEALEKMNEDHVQKNGRKAASFLKDDGDPPLLYDE</sequence>
<comment type="function">
    <text evidence="5 7 8 9">Involved in regulation of type I interferon (IFN)-dependent immune response which plays a critical role in the innate immune response against DNA and RNA viruses. May act as an adapter protein essential for the recruitment of TBK1 to IRF3 (PubMed:24807708). Phosphorylates IFIH1 on 'Ser-828' interfering with IFIH1 filament assembly on long dsRNA and resulting in attenuated IFIH1-signaling (PubMed:25865883). Can inhibit CASP10 isoform 7-mediated activation of the NF-kappaB signaling pathway (PubMed:19557502). May play a role in the biogenesis of the 40S ribosomal subunit. Involved in the processing of 21S pre-rRNA to the mature 18S rRNA (PubMed:22418843).</text>
</comment>
<comment type="catalytic activity">
    <reaction>
        <text>L-seryl-[protein] + ATP = O-phospho-L-seryl-[protein] + ADP + H(+)</text>
        <dbReference type="Rhea" id="RHEA:17989"/>
        <dbReference type="Rhea" id="RHEA-COMP:9863"/>
        <dbReference type="Rhea" id="RHEA-COMP:11604"/>
        <dbReference type="ChEBI" id="CHEBI:15378"/>
        <dbReference type="ChEBI" id="CHEBI:29999"/>
        <dbReference type="ChEBI" id="CHEBI:30616"/>
        <dbReference type="ChEBI" id="CHEBI:83421"/>
        <dbReference type="ChEBI" id="CHEBI:456216"/>
        <dbReference type="EC" id="2.7.11.1"/>
    </reaction>
</comment>
<comment type="catalytic activity">
    <reaction>
        <text>L-threonyl-[protein] + ATP = O-phospho-L-threonyl-[protein] + ADP + H(+)</text>
        <dbReference type="Rhea" id="RHEA:46608"/>
        <dbReference type="Rhea" id="RHEA-COMP:11060"/>
        <dbReference type="Rhea" id="RHEA-COMP:11605"/>
        <dbReference type="ChEBI" id="CHEBI:15378"/>
        <dbReference type="ChEBI" id="CHEBI:30013"/>
        <dbReference type="ChEBI" id="CHEBI:30616"/>
        <dbReference type="ChEBI" id="CHEBI:61977"/>
        <dbReference type="ChEBI" id="CHEBI:456216"/>
        <dbReference type="EC" id="2.7.11.1"/>
    </reaction>
</comment>
<comment type="cofactor">
    <cofactor evidence="12">
        <name>Mg(2+)</name>
        <dbReference type="ChEBI" id="CHEBI:18420"/>
    </cofactor>
</comment>
<comment type="subunit">
    <text evidence="5 6 7">Interacts with CASP10 (PubMed:19557502). Interacts with IRF3; RIOK3 probably mediates the interaction of TBK1 with IRF3 (PubMed:24807708). Associated with 40S pre-ribosomal particles.</text>
</comment>
<comment type="interaction">
    <interactant intactId="EBI-1047061">
        <id>O14730</id>
    </interactant>
    <interactant intactId="EBI-495095">
        <id>Q92851</id>
        <label>CASP10</label>
    </interactant>
    <organismsDiffer>false</organismsDiffer>
    <experiments>6</experiments>
</comment>
<comment type="interaction">
    <interactant intactId="EBI-1047061">
        <id>O14730</id>
    </interactant>
    <interactant intactId="EBI-12737837">
        <id>Q92851-7</id>
        <label>CASP10</label>
    </interactant>
    <organismsDiffer>false</organismsDiffer>
    <experiments>3</experiments>
</comment>
<comment type="interaction">
    <interactant intactId="EBI-1047061">
        <id>O14730</id>
    </interactant>
    <interactant intactId="EBI-6115771">
        <id>Q9BYX4</id>
        <label>IFIH1</label>
    </interactant>
    <organismsDiffer>false</organismsDiffer>
    <experiments>6</experiments>
</comment>
<comment type="interaction">
    <interactant intactId="EBI-1047061">
        <id>O14730</id>
    </interactant>
    <interactant intactId="EBI-2650369">
        <id>Q14653</id>
        <label>IRF3</label>
    </interactant>
    <organismsDiffer>false</organismsDiffer>
    <experiments>6</experiments>
</comment>
<comment type="interaction">
    <interactant intactId="EBI-1047061">
        <id>O14730</id>
    </interactant>
    <interactant intactId="EBI-356402">
        <id>Q9UHD2</id>
        <label>TBK1</label>
    </interactant>
    <organismsDiffer>false</organismsDiffer>
    <experiments>3</experiments>
</comment>
<comment type="subcellular location">
    <subcellularLocation>
        <location evidence="7">Cytoplasm</location>
    </subcellularLocation>
</comment>
<comment type="alternative products">
    <event type="alternative splicing"/>
    <isoform>
        <id>O14730-1</id>
        <name>1</name>
        <sequence type="displayed"/>
    </isoform>
    <isoform>
        <id>O14730-2</id>
        <name>2</name>
        <sequence type="described" ref="VSP_012164"/>
    </isoform>
</comment>
<comment type="tissue specificity">
    <text evidence="10">Widely expressed.</text>
</comment>
<comment type="PTM">
    <text evidence="5">Autophosphorylated (in vitro).</text>
</comment>
<comment type="similarity">
    <text evidence="12">Belongs to the protein kinase superfamily. RIO-type Ser/Thr kinase family.</text>
</comment>
<evidence type="ECO:0000250" key="1"/>
<evidence type="ECO:0000250" key="2">
    <source>
        <dbReference type="UniProtKB" id="Q9DBU3"/>
    </source>
</evidence>
<evidence type="ECO:0000256" key="3">
    <source>
        <dbReference type="SAM" id="MobiDB-lite"/>
    </source>
</evidence>
<evidence type="ECO:0000269" key="4">
    <source>
    </source>
</evidence>
<evidence type="ECO:0000269" key="5">
    <source>
    </source>
</evidence>
<evidence type="ECO:0000269" key="6">
    <source>
    </source>
</evidence>
<evidence type="ECO:0000269" key="7">
    <source>
    </source>
</evidence>
<evidence type="ECO:0000269" key="8">
    <source>
    </source>
</evidence>
<evidence type="ECO:0000269" key="9">
    <source>
    </source>
</evidence>
<evidence type="ECO:0000269" key="10">
    <source>
    </source>
</evidence>
<evidence type="ECO:0000303" key="11">
    <source>
    </source>
</evidence>
<evidence type="ECO:0000305" key="12"/>
<evidence type="ECO:0007744" key="13">
    <source>
    </source>
</evidence>
<evidence type="ECO:0007744" key="14">
    <source>
    </source>
</evidence>
<name>RIOK3_HUMAN</name>
<dbReference type="EC" id="2.7.11.1"/>
<dbReference type="EMBL" id="AF013591">
    <property type="protein sequence ID" value="AAC26080.1"/>
    <property type="molecule type" value="mRNA"/>
</dbReference>
<dbReference type="EMBL" id="AC026634">
    <property type="status" value="NOT_ANNOTATED_CDS"/>
    <property type="molecule type" value="Genomic_DNA"/>
</dbReference>
<dbReference type="EMBL" id="BC039729">
    <property type="protein sequence ID" value="AAH39729.1"/>
    <property type="molecule type" value="mRNA"/>
</dbReference>
<dbReference type="CCDS" id="CCDS11877.1">
    <molecule id="O14730-1"/>
</dbReference>
<dbReference type="RefSeq" id="NP_003822.2">
    <molecule id="O14730-1"/>
    <property type="nucleotide sequence ID" value="NM_003831.4"/>
</dbReference>
<dbReference type="PDB" id="8ZDB">
    <property type="method" value="EM"/>
    <property type="resolution" value="3.60 A"/>
    <property type="chains" value="p=1-519"/>
</dbReference>
<dbReference type="PDB" id="8ZDC">
    <property type="method" value="EM"/>
    <property type="resolution" value="3.80 A"/>
    <property type="chains" value="p=1-519"/>
</dbReference>
<dbReference type="PDB" id="8ZDD">
    <property type="method" value="EM"/>
    <property type="resolution" value="3.70 A"/>
    <property type="chains" value="p=1-519"/>
</dbReference>
<dbReference type="PDBsum" id="8ZDB"/>
<dbReference type="PDBsum" id="8ZDC"/>
<dbReference type="PDBsum" id="8ZDD"/>
<dbReference type="EMDB" id="EMD-39956"/>
<dbReference type="EMDB" id="EMD-39957"/>
<dbReference type="EMDB" id="EMD-39958"/>
<dbReference type="SMR" id="O14730"/>
<dbReference type="BioGRID" id="114309">
    <property type="interactions" value="100"/>
</dbReference>
<dbReference type="FunCoup" id="O14730">
    <property type="interactions" value="430"/>
</dbReference>
<dbReference type="IntAct" id="O14730">
    <property type="interactions" value="60"/>
</dbReference>
<dbReference type="STRING" id="9606.ENSP00000341874"/>
<dbReference type="BindingDB" id="O14730"/>
<dbReference type="ChEMBL" id="CHEMBL5659"/>
<dbReference type="DrugBank" id="DB12010">
    <property type="generic name" value="Fostamatinib"/>
</dbReference>
<dbReference type="DrugCentral" id="O14730"/>
<dbReference type="GlyGen" id="O14730">
    <property type="glycosylation" value="1 site, 1 O-linked glycan (1 site)"/>
</dbReference>
<dbReference type="iPTMnet" id="O14730"/>
<dbReference type="PhosphoSitePlus" id="O14730"/>
<dbReference type="BioMuta" id="RIOK3"/>
<dbReference type="CPTAC" id="non-CPTAC-6001"/>
<dbReference type="jPOST" id="O14730"/>
<dbReference type="MassIVE" id="O14730"/>
<dbReference type="PaxDb" id="9606-ENSP00000341874"/>
<dbReference type="PeptideAtlas" id="O14730"/>
<dbReference type="ProteomicsDB" id="48188">
    <molecule id="O14730-1"/>
</dbReference>
<dbReference type="ProteomicsDB" id="48189">
    <molecule id="O14730-2"/>
</dbReference>
<dbReference type="Pumba" id="O14730"/>
<dbReference type="Antibodypedia" id="967">
    <property type="antibodies" value="203 antibodies from 31 providers"/>
</dbReference>
<dbReference type="DNASU" id="8780"/>
<dbReference type="Ensembl" id="ENST00000339486.8">
    <molecule id="O14730-1"/>
    <property type="protein sequence ID" value="ENSP00000341874.3"/>
    <property type="gene ID" value="ENSG00000101782.15"/>
</dbReference>
<dbReference type="Ensembl" id="ENST00000577501.5">
    <molecule id="O14730-2"/>
    <property type="protein sequence ID" value="ENSP00000462548.1"/>
    <property type="gene ID" value="ENSG00000101782.15"/>
</dbReference>
<dbReference type="GeneID" id="8780"/>
<dbReference type="KEGG" id="hsa:8780"/>
<dbReference type="MANE-Select" id="ENST00000339486.8">
    <property type="protein sequence ID" value="ENSP00000341874.3"/>
    <property type="RefSeq nucleotide sequence ID" value="NM_003831.5"/>
    <property type="RefSeq protein sequence ID" value="NP_003822.2"/>
</dbReference>
<dbReference type="UCSC" id="uc002kui.5">
    <molecule id="O14730-1"/>
    <property type="organism name" value="human"/>
</dbReference>
<dbReference type="AGR" id="HGNC:11451"/>
<dbReference type="CTD" id="8780"/>
<dbReference type="DisGeNET" id="8780"/>
<dbReference type="GeneCards" id="RIOK3"/>
<dbReference type="HGNC" id="HGNC:11451">
    <property type="gene designation" value="RIOK3"/>
</dbReference>
<dbReference type="HPA" id="ENSG00000101782">
    <property type="expression patterns" value="Tissue enhanced (bone)"/>
</dbReference>
<dbReference type="MIM" id="603579">
    <property type="type" value="gene"/>
</dbReference>
<dbReference type="neXtProt" id="NX_O14730"/>
<dbReference type="OpenTargets" id="ENSG00000101782"/>
<dbReference type="PharmGKB" id="PA36248"/>
<dbReference type="VEuPathDB" id="HostDB:ENSG00000101782"/>
<dbReference type="eggNOG" id="KOG2269">
    <property type="taxonomic scope" value="Eukaryota"/>
</dbReference>
<dbReference type="GeneTree" id="ENSGT00940000157008"/>
<dbReference type="InParanoid" id="O14730"/>
<dbReference type="OMA" id="SKCPWGA"/>
<dbReference type="OrthoDB" id="205248at2759"/>
<dbReference type="PAN-GO" id="O14730">
    <property type="GO annotations" value="4 GO annotations based on evolutionary models"/>
</dbReference>
<dbReference type="PhylomeDB" id="O14730"/>
<dbReference type="TreeFam" id="TF105831"/>
<dbReference type="PathwayCommons" id="O14730"/>
<dbReference type="Reactome" id="R-HSA-6791226">
    <property type="pathway name" value="Major pathway of rRNA processing in the nucleolus and cytosol"/>
</dbReference>
<dbReference type="SignaLink" id="O14730"/>
<dbReference type="SIGNOR" id="O14730"/>
<dbReference type="BioGRID-ORCS" id="8780">
    <property type="hits" value="46 hits in 1194 CRISPR screens"/>
</dbReference>
<dbReference type="ChiTaRS" id="RIOK3">
    <property type="organism name" value="human"/>
</dbReference>
<dbReference type="GenomeRNAi" id="8780"/>
<dbReference type="Pharos" id="O14730">
    <property type="development level" value="Tchem"/>
</dbReference>
<dbReference type="PRO" id="PR:O14730"/>
<dbReference type="Proteomes" id="UP000005640">
    <property type="component" value="Chromosome 18"/>
</dbReference>
<dbReference type="RNAct" id="O14730">
    <property type="molecule type" value="protein"/>
</dbReference>
<dbReference type="Bgee" id="ENSG00000101782">
    <property type="expression patterns" value="Expressed in jejunal mucosa and 212 other cell types or tissues"/>
</dbReference>
<dbReference type="ExpressionAtlas" id="O14730">
    <property type="expression patterns" value="baseline and differential"/>
</dbReference>
<dbReference type="GO" id="GO:0005829">
    <property type="term" value="C:cytosol"/>
    <property type="evidence" value="ECO:0000318"/>
    <property type="project" value="GO_Central"/>
</dbReference>
<dbReference type="GO" id="GO:0030688">
    <property type="term" value="C:preribosome, small subunit precursor"/>
    <property type="evidence" value="ECO:0000314"/>
    <property type="project" value="UniProtKB"/>
</dbReference>
<dbReference type="GO" id="GO:0005524">
    <property type="term" value="F:ATP binding"/>
    <property type="evidence" value="ECO:0007669"/>
    <property type="project" value="UniProtKB-KW"/>
</dbReference>
<dbReference type="GO" id="GO:0089720">
    <property type="term" value="F:caspase binding"/>
    <property type="evidence" value="ECO:0000314"/>
    <property type="project" value="UniProtKB"/>
</dbReference>
<dbReference type="GO" id="GO:0046872">
    <property type="term" value="F:metal ion binding"/>
    <property type="evidence" value="ECO:0007669"/>
    <property type="project" value="UniProtKB-KW"/>
</dbReference>
<dbReference type="GO" id="GO:0106310">
    <property type="term" value="F:protein serine kinase activity"/>
    <property type="evidence" value="ECO:0007669"/>
    <property type="project" value="RHEA"/>
</dbReference>
<dbReference type="GO" id="GO:0004674">
    <property type="term" value="F:protein serine/threonine kinase activity"/>
    <property type="evidence" value="ECO:0000314"/>
    <property type="project" value="UniProtKB"/>
</dbReference>
<dbReference type="GO" id="GO:1990786">
    <property type="term" value="P:cellular response to dsDNA"/>
    <property type="evidence" value="ECO:0000315"/>
    <property type="project" value="UniProtKB"/>
</dbReference>
<dbReference type="GO" id="GO:0071359">
    <property type="term" value="P:cellular response to dsRNA"/>
    <property type="evidence" value="ECO:0000315"/>
    <property type="project" value="UniProtKB"/>
</dbReference>
<dbReference type="GO" id="GO:0098586">
    <property type="term" value="P:cellular response to virus"/>
    <property type="evidence" value="ECO:0000315"/>
    <property type="project" value="UniProtKB"/>
</dbReference>
<dbReference type="GO" id="GO:0007059">
    <property type="term" value="P:chromosome segregation"/>
    <property type="evidence" value="ECO:0000304"/>
    <property type="project" value="ProtInc"/>
</dbReference>
<dbReference type="GO" id="GO:0051607">
    <property type="term" value="P:defense response to virus"/>
    <property type="evidence" value="ECO:0007669"/>
    <property type="project" value="UniProtKB-KW"/>
</dbReference>
<dbReference type="GO" id="GO:0045087">
    <property type="term" value="P:innate immune response"/>
    <property type="evidence" value="ECO:0007669"/>
    <property type="project" value="UniProtKB-KW"/>
</dbReference>
<dbReference type="GO" id="GO:0030490">
    <property type="term" value="P:maturation of SSU-rRNA"/>
    <property type="evidence" value="ECO:0000315"/>
    <property type="project" value="UniProtKB"/>
</dbReference>
<dbReference type="GO" id="GO:0043124">
    <property type="term" value="P:negative regulation of canonical NF-kappaB signal transduction"/>
    <property type="evidence" value="ECO:0000314"/>
    <property type="project" value="UniProtKB"/>
</dbReference>
<dbReference type="GO" id="GO:0039534">
    <property type="term" value="P:negative regulation of MDA-5 signaling pathway"/>
    <property type="evidence" value="ECO:0000315"/>
    <property type="project" value="UniProtKB"/>
</dbReference>
<dbReference type="GO" id="GO:0031333">
    <property type="term" value="P:negative regulation of protein-containing complex assembly"/>
    <property type="evidence" value="ECO:0000314"/>
    <property type="project" value="UniProtKB"/>
</dbReference>
<dbReference type="GO" id="GO:0045089">
    <property type="term" value="P:positive regulation of innate immune response"/>
    <property type="evidence" value="ECO:0000315"/>
    <property type="project" value="UniProtKB"/>
</dbReference>
<dbReference type="GO" id="GO:0032728">
    <property type="term" value="P:positive regulation of interferon-beta production"/>
    <property type="evidence" value="ECO:0000315"/>
    <property type="project" value="UniProtKB"/>
</dbReference>
<dbReference type="CDD" id="cd05146">
    <property type="entry name" value="RIO3_euk"/>
    <property type="match status" value="1"/>
</dbReference>
<dbReference type="FunFam" id="1.10.510.10:FF:002039">
    <property type="entry name" value="cDNA FLJ50375, highly similar to Serine/threonine-protein kinase RIO3"/>
    <property type="match status" value="1"/>
</dbReference>
<dbReference type="FunFam" id="3.30.200.20:FF:000200">
    <property type="entry name" value="Serine/threonine-protein kinase RIO3"/>
    <property type="match status" value="1"/>
</dbReference>
<dbReference type="Gene3D" id="3.30.200.20">
    <property type="entry name" value="Phosphorylase Kinase, domain 1"/>
    <property type="match status" value="1"/>
</dbReference>
<dbReference type="Gene3D" id="1.10.510.10">
    <property type="entry name" value="Transferase(Phosphotransferase) domain 1"/>
    <property type="match status" value="1"/>
</dbReference>
<dbReference type="InterPro" id="IPR011009">
    <property type="entry name" value="Kinase-like_dom_sf"/>
</dbReference>
<dbReference type="InterPro" id="IPR051272">
    <property type="entry name" value="RIO-type_Ser/Thr_kinase"/>
</dbReference>
<dbReference type="InterPro" id="IPR018934">
    <property type="entry name" value="RIO_dom"/>
</dbReference>
<dbReference type="InterPro" id="IPR000687">
    <property type="entry name" value="RIO_kinase"/>
</dbReference>
<dbReference type="InterPro" id="IPR018935">
    <property type="entry name" value="RIO_kinase_CS"/>
</dbReference>
<dbReference type="InterPro" id="IPR017406">
    <property type="entry name" value="Ser/Thr_kinase_Rio3"/>
</dbReference>
<dbReference type="PANTHER" id="PTHR45723">
    <property type="entry name" value="SERINE/THREONINE-PROTEIN KINASE RIO1"/>
    <property type="match status" value="1"/>
</dbReference>
<dbReference type="Pfam" id="PF01163">
    <property type="entry name" value="RIO1"/>
    <property type="match status" value="1"/>
</dbReference>
<dbReference type="PIRSF" id="PIRSF038146">
    <property type="entry name" value="Ser/Thr_PK_RIO3"/>
    <property type="match status" value="1"/>
</dbReference>
<dbReference type="SMART" id="SM00090">
    <property type="entry name" value="RIO"/>
    <property type="match status" value="1"/>
</dbReference>
<dbReference type="SUPFAM" id="SSF56112">
    <property type="entry name" value="Protein kinase-like (PK-like)"/>
    <property type="match status" value="1"/>
</dbReference>
<dbReference type="PROSITE" id="PS01245">
    <property type="entry name" value="RIO1"/>
    <property type="match status" value="1"/>
</dbReference>
<accession>O14730</accession>
<accession>Q8IXN9</accession>
<proteinExistence type="evidence at protein level"/>
<protein>
    <recommendedName>
        <fullName>Serine/threonine-protein kinase RIO3</fullName>
        <ecNumber>2.7.11.1</ecNumber>
    </recommendedName>
    <alternativeName>
        <fullName>RIO kinase 3</fullName>
    </alternativeName>
    <alternativeName>
        <fullName>sudD homolog</fullName>
    </alternativeName>
</protein>